<dbReference type="EMBL" id="AE000516">
    <property type="protein sequence ID" value="AAK44583.1"/>
    <property type="molecule type" value="Genomic_DNA"/>
</dbReference>
<dbReference type="PIR" id="C70574">
    <property type="entry name" value="C70574"/>
</dbReference>
<dbReference type="RefSeq" id="WP_003898409.1">
    <property type="nucleotide sequence ID" value="NZ_KK341227.1"/>
</dbReference>
<dbReference type="SMR" id="P9WQM6"/>
<dbReference type="KEGG" id="mtc:MT0361"/>
<dbReference type="PATRIC" id="fig|83331.31.peg.382"/>
<dbReference type="HOGENOM" id="CLU_007946_9_0_11"/>
<dbReference type="Proteomes" id="UP000001020">
    <property type="component" value="Chromosome"/>
</dbReference>
<dbReference type="GO" id="GO:0005886">
    <property type="term" value="C:plasma membrane"/>
    <property type="evidence" value="ECO:0007669"/>
    <property type="project" value="UniProtKB-SubCell"/>
</dbReference>
<dbReference type="GO" id="GO:0006865">
    <property type="term" value="P:amino acid transport"/>
    <property type="evidence" value="ECO:0007669"/>
    <property type="project" value="UniProtKB-KW"/>
</dbReference>
<dbReference type="GO" id="GO:0055085">
    <property type="term" value="P:transmembrane transport"/>
    <property type="evidence" value="ECO:0007669"/>
    <property type="project" value="InterPro"/>
</dbReference>
<dbReference type="FunFam" id="1.20.1740.10:FF:000001">
    <property type="entry name" value="Amino acid permease"/>
    <property type="match status" value="1"/>
</dbReference>
<dbReference type="Gene3D" id="1.20.1740.10">
    <property type="entry name" value="Amino acid/polyamine transporter I"/>
    <property type="match status" value="1"/>
</dbReference>
<dbReference type="InterPro" id="IPR004841">
    <property type="entry name" value="AA-permease/SLC12A_dom"/>
</dbReference>
<dbReference type="InterPro" id="IPR004840">
    <property type="entry name" value="Amino_acid_permease_CS"/>
</dbReference>
<dbReference type="PANTHER" id="PTHR43495">
    <property type="entry name" value="GABA PERMEASE"/>
    <property type="match status" value="1"/>
</dbReference>
<dbReference type="PANTHER" id="PTHR43495:SF1">
    <property type="entry name" value="L-ASPARAGINE PERMEASE"/>
    <property type="match status" value="1"/>
</dbReference>
<dbReference type="Pfam" id="PF00324">
    <property type="entry name" value="AA_permease"/>
    <property type="match status" value="1"/>
</dbReference>
<dbReference type="PIRSF" id="PIRSF006060">
    <property type="entry name" value="AA_transporter"/>
    <property type="match status" value="1"/>
</dbReference>
<dbReference type="PROSITE" id="PS00218">
    <property type="entry name" value="AMINO_ACID_PERMEASE_1"/>
    <property type="match status" value="1"/>
</dbReference>
<accession>P9WQM6</accession>
<accession>L0T3E0</accession>
<accession>O06297</accession>
<accession>P0A4W0</accession>
<sequence length="487" mass="52195">MPPLDITDERLTREDTGYHKGLHSRQLQMIALGGAIGTGLFLGAGGRLASAGPGLFLVYGICGIFVFLILRALGELVLHRPSSGSFVSYAREFYGEKVAFVAGWMYFLNWAMTGIVDTTAIAHYCHYWRAFQPIPQWTLALIALLVVLSMNLISVRLFGELEFWASLIKVIALVTFLIVGTVFLAGRYKIDGQETGVSLWSSHGGIVPTGLLPIVLVTSGVVFAYAAIELVGIAAGETAEPAKIMPRAINSVVLRIACFYVGSTVLLALLLPYTAYKEHVSPFVTFFSKIGIDAAGSVMNLVVLTAALSSLNAGLYSTGRILRSMAINGSGPRFTAPMSKTGVPYGGILLTAGIGLLGIILNAIKPSQAFEIVLHIAATGVIAAWATIVACQLRLHRMANAGQLQRPKFRMPLSPFSGYLTLAFLAGVLILMYFDEQHGPWMIAATVIGVPALIGGWYLVRNRVTAVAHHAIDHTKSVAVVHSADPI</sequence>
<organism>
    <name type="scientific">Mycobacterium tuberculosis (strain CDC 1551 / Oshkosh)</name>
    <dbReference type="NCBI Taxonomy" id="83331"/>
    <lineage>
        <taxon>Bacteria</taxon>
        <taxon>Bacillati</taxon>
        <taxon>Actinomycetota</taxon>
        <taxon>Actinomycetes</taxon>
        <taxon>Mycobacteriales</taxon>
        <taxon>Mycobacteriaceae</taxon>
        <taxon>Mycobacterium</taxon>
        <taxon>Mycobacterium tuberculosis complex</taxon>
    </lineage>
</organism>
<evidence type="ECO:0000250" key="1">
    <source>
        <dbReference type="UniProtKB" id="P9WQM7"/>
    </source>
</evidence>
<evidence type="ECO:0000255" key="2"/>
<evidence type="ECO:0000305" key="3"/>
<protein>
    <recommendedName>
        <fullName>L-asparagine permease 2</fullName>
    </recommendedName>
    <alternativeName>
        <fullName>L-asparagine transport protein 2</fullName>
    </alternativeName>
</protein>
<name>ANSP2_MYCTO</name>
<comment type="function">
    <text evidence="1">Dual function in both nitrogen assimilation and in protection against acid stress during infection. Involved in asparagine uptake.</text>
</comment>
<comment type="subcellular location">
    <subcellularLocation>
        <location evidence="3">Cell membrane</location>
        <topology evidence="2">Multi-pass membrane protein</topology>
    </subcellularLocation>
</comment>
<comment type="similarity">
    <text evidence="3">Belongs to the amino acid-polyamine-organocation (APC) superfamily. Amino acid transporter (AAT) (TC 2.A.3.1) family.</text>
</comment>
<gene>
    <name type="primary">ansP2</name>
    <name type="ordered locus">MT0361</name>
</gene>
<keyword id="KW-0029">Amino-acid transport</keyword>
<keyword id="KW-1003">Cell membrane</keyword>
<keyword id="KW-0472">Membrane</keyword>
<keyword id="KW-1185">Reference proteome</keyword>
<keyword id="KW-0812">Transmembrane</keyword>
<keyword id="KW-1133">Transmembrane helix</keyword>
<keyword id="KW-0813">Transport</keyword>
<reference key="1">
    <citation type="journal article" date="2002" name="J. Bacteriol.">
        <title>Whole-genome comparison of Mycobacterium tuberculosis clinical and laboratory strains.</title>
        <authorList>
            <person name="Fleischmann R.D."/>
            <person name="Alland D."/>
            <person name="Eisen J.A."/>
            <person name="Carpenter L."/>
            <person name="White O."/>
            <person name="Peterson J.D."/>
            <person name="DeBoy R.T."/>
            <person name="Dodson R.J."/>
            <person name="Gwinn M.L."/>
            <person name="Haft D.H."/>
            <person name="Hickey E.K."/>
            <person name="Kolonay J.F."/>
            <person name="Nelson W.C."/>
            <person name="Umayam L.A."/>
            <person name="Ermolaeva M.D."/>
            <person name="Salzberg S.L."/>
            <person name="Delcher A."/>
            <person name="Utterback T.R."/>
            <person name="Weidman J.F."/>
            <person name="Khouri H.M."/>
            <person name="Gill J."/>
            <person name="Mikula A."/>
            <person name="Bishai W."/>
            <person name="Jacobs W.R. Jr."/>
            <person name="Venter J.C."/>
            <person name="Fraser C.M."/>
        </authorList>
    </citation>
    <scope>NUCLEOTIDE SEQUENCE [LARGE SCALE GENOMIC DNA]</scope>
    <source>
        <strain>CDC 1551 / Oshkosh</strain>
    </source>
</reference>
<feature type="chain" id="PRO_0000426749" description="L-asparagine permease 2">
    <location>
        <begin position="1"/>
        <end position="487"/>
    </location>
</feature>
<feature type="transmembrane region" description="Helical" evidence="2">
    <location>
        <begin position="26"/>
        <end position="46"/>
    </location>
</feature>
<feature type="transmembrane region" description="Helical" evidence="2">
    <location>
        <begin position="50"/>
        <end position="70"/>
    </location>
</feature>
<feature type="transmembrane region" description="Helical" evidence="2">
    <location>
        <begin position="98"/>
        <end position="118"/>
    </location>
</feature>
<feature type="transmembrane region" description="Helical" evidence="2">
    <location>
        <begin position="133"/>
        <end position="153"/>
    </location>
</feature>
<feature type="transmembrane region" description="Helical" evidence="2">
    <location>
        <begin position="163"/>
        <end position="183"/>
    </location>
</feature>
<feature type="transmembrane region" description="Helical" evidence="2">
    <location>
        <begin position="214"/>
        <end position="234"/>
    </location>
</feature>
<feature type="transmembrane region" description="Helical" evidence="2">
    <location>
        <begin position="256"/>
        <end position="276"/>
    </location>
</feature>
<feature type="transmembrane region" description="Helical" evidence="2">
    <location>
        <begin position="290"/>
        <end position="310"/>
    </location>
</feature>
<feature type="transmembrane region" description="Helical" evidence="2">
    <location>
        <begin position="341"/>
        <end position="361"/>
    </location>
</feature>
<feature type="transmembrane region" description="Helical" evidence="2">
    <location>
        <begin position="369"/>
        <end position="389"/>
    </location>
</feature>
<feature type="transmembrane region" description="Helical" evidence="2">
    <location>
        <begin position="414"/>
        <end position="434"/>
    </location>
</feature>
<feature type="transmembrane region" description="Helical" evidence="2">
    <location>
        <begin position="440"/>
        <end position="460"/>
    </location>
</feature>
<proteinExistence type="inferred from homology"/>